<dbReference type="EMBL" id="BA000018">
    <property type="protein sequence ID" value="BAB43778.1"/>
    <property type="molecule type" value="Genomic_DNA"/>
</dbReference>
<dbReference type="PIR" id="H90076">
    <property type="entry name" value="H90076"/>
</dbReference>
<dbReference type="RefSeq" id="WP_001065591.1">
    <property type="nucleotide sequence ID" value="NC_002745.2"/>
</dbReference>
<dbReference type="SMR" id="P64380"/>
<dbReference type="EnsemblBacteria" id="BAB43778">
    <property type="protein sequence ID" value="BAB43778"/>
    <property type="gene ID" value="BAB43778"/>
</dbReference>
<dbReference type="KEGG" id="sau:SA2472"/>
<dbReference type="HOGENOM" id="CLU_089652_0_0_9"/>
<dbReference type="UniPathway" id="UPA00031">
    <property type="reaction ID" value="UER00006"/>
</dbReference>
<dbReference type="GO" id="GO:0005737">
    <property type="term" value="C:cytoplasm"/>
    <property type="evidence" value="ECO:0007669"/>
    <property type="project" value="UniProtKB-SubCell"/>
</dbReference>
<dbReference type="GO" id="GO:0140096">
    <property type="term" value="F:catalytic activity, acting on a protein"/>
    <property type="evidence" value="ECO:0007669"/>
    <property type="project" value="UniProtKB-ARBA"/>
</dbReference>
<dbReference type="GO" id="GO:0016740">
    <property type="term" value="F:transferase activity"/>
    <property type="evidence" value="ECO:0007669"/>
    <property type="project" value="UniProtKB-ARBA"/>
</dbReference>
<dbReference type="GO" id="GO:0000105">
    <property type="term" value="P:L-histidine biosynthetic process"/>
    <property type="evidence" value="ECO:0007669"/>
    <property type="project" value="UniProtKB-UniRule"/>
</dbReference>
<dbReference type="Gene3D" id="3.30.930.10">
    <property type="entry name" value="Bira Bifunctional Protein, Domain 2"/>
    <property type="match status" value="1"/>
</dbReference>
<dbReference type="HAMAP" id="MF_00125">
    <property type="entry name" value="HisZ"/>
    <property type="match status" value="1"/>
</dbReference>
<dbReference type="InterPro" id="IPR045864">
    <property type="entry name" value="aa-tRNA-synth_II/BPL/LPL"/>
</dbReference>
<dbReference type="InterPro" id="IPR041715">
    <property type="entry name" value="HisRS-like_core"/>
</dbReference>
<dbReference type="InterPro" id="IPR004517">
    <property type="entry name" value="HisZ"/>
</dbReference>
<dbReference type="NCBIfam" id="NF008947">
    <property type="entry name" value="PRK12294.1"/>
    <property type="match status" value="1"/>
</dbReference>
<dbReference type="Pfam" id="PF13393">
    <property type="entry name" value="tRNA-synt_His"/>
    <property type="match status" value="1"/>
</dbReference>
<dbReference type="SUPFAM" id="SSF55681">
    <property type="entry name" value="Class II aaRS and biotin synthetases"/>
    <property type="match status" value="1"/>
</dbReference>
<evidence type="ECO:0000250" key="1"/>
<evidence type="ECO:0000305" key="2"/>
<keyword id="KW-0028">Amino-acid biosynthesis</keyword>
<keyword id="KW-0963">Cytoplasm</keyword>
<keyword id="KW-0368">Histidine biosynthesis</keyword>
<gene>
    <name type="primary">hisZ</name>
    <name type="ordered locus">SA2472</name>
</gene>
<feature type="chain" id="PRO_0000171061" description="ATP phosphoribosyltransferase regulatory subunit">
    <location>
        <begin position="1"/>
        <end position="272"/>
    </location>
</feature>
<proteinExistence type="inferred from homology"/>
<name>HISZ_STAAN</name>
<accession>P64380</accession>
<accession>Q99QW1</accession>
<organism>
    <name type="scientific">Staphylococcus aureus (strain N315)</name>
    <dbReference type="NCBI Taxonomy" id="158879"/>
    <lineage>
        <taxon>Bacteria</taxon>
        <taxon>Bacillati</taxon>
        <taxon>Bacillota</taxon>
        <taxon>Bacilli</taxon>
        <taxon>Bacillales</taxon>
        <taxon>Staphylococcaceae</taxon>
        <taxon>Staphylococcus</taxon>
    </lineage>
</organism>
<reference key="1">
    <citation type="journal article" date="2001" name="Lancet">
        <title>Whole genome sequencing of meticillin-resistant Staphylococcus aureus.</title>
        <authorList>
            <person name="Kuroda M."/>
            <person name="Ohta T."/>
            <person name="Uchiyama I."/>
            <person name="Baba T."/>
            <person name="Yuzawa H."/>
            <person name="Kobayashi I."/>
            <person name="Cui L."/>
            <person name="Oguchi A."/>
            <person name="Aoki K."/>
            <person name="Nagai Y."/>
            <person name="Lian J.-Q."/>
            <person name="Ito T."/>
            <person name="Kanamori M."/>
            <person name="Matsumaru H."/>
            <person name="Maruyama A."/>
            <person name="Murakami H."/>
            <person name="Hosoyama A."/>
            <person name="Mizutani-Ui Y."/>
            <person name="Takahashi N.K."/>
            <person name="Sawano T."/>
            <person name="Inoue R."/>
            <person name="Kaito C."/>
            <person name="Sekimizu K."/>
            <person name="Hirakawa H."/>
            <person name="Kuhara S."/>
            <person name="Goto S."/>
            <person name="Yabuzaki J."/>
            <person name="Kanehisa M."/>
            <person name="Yamashita A."/>
            <person name="Oshima K."/>
            <person name="Furuya K."/>
            <person name="Yoshino C."/>
            <person name="Shiba T."/>
            <person name="Hattori M."/>
            <person name="Ogasawara N."/>
            <person name="Hayashi H."/>
            <person name="Hiramatsu K."/>
        </authorList>
    </citation>
    <scope>NUCLEOTIDE SEQUENCE [LARGE SCALE GENOMIC DNA]</scope>
    <source>
        <strain>N315</strain>
    </source>
</reference>
<comment type="function">
    <text evidence="1">Required for the first step of histidine biosynthesis. May allow the feedback regulation of ATP phosphoribosyltransferase activity by histidine (By similarity).</text>
</comment>
<comment type="pathway">
    <text>Amino-acid biosynthesis; L-histidine biosynthesis; L-histidine from 5-phospho-alpha-D-ribose 1-diphosphate: step 1/9.</text>
</comment>
<comment type="subunit">
    <text evidence="1">Heteromultimer composed of HisG and HisZ subunits.</text>
</comment>
<comment type="subcellular location">
    <subcellularLocation>
        <location evidence="1">Cytoplasm</location>
    </subcellularLocation>
</comment>
<comment type="miscellaneous">
    <text>This function is generally fulfilled by the C-terminal part of HisG, which is missing in some bacteria such as this one.</text>
</comment>
<comment type="similarity">
    <text evidence="2">Belongs to the class-II aminoacyl-tRNA synthetase family. HisZ subfamily.</text>
</comment>
<protein>
    <recommendedName>
        <fullName>ATP phosphoribosyltransferase regulatory subunit</fullName>
    </recommendedName>
</protein>
<sequence>MNNSEQLIALKESETAFLKYFNKADYELVDFSVVEKLDWKQLNHEDLQQMGERNFWQHEHQIYALRNDFTDQLLRYYSMYPTAATKVAYTGLIIRNNEAAVQVGLENYAPSLANVQQSLKLFIQFIQQQLRDNVHFVVLGHYQLLDALLDKSLQTPDILSMIEERNLSGLVTYLSTEHPIVQILKENTQQQLNVLEHYIPNDHPALVELKIWERWLHTQGYKDIHLDITAQPPRSYYTGLFIQCHFAENESRVLTGGYYKGSIEGFGLGLTL</sequence>